<accession>Q6D006</accession>
<organism>
    <name type="scientific">Pectobacterium atrosepticum (strain SCRI 1043 / ATCC BAA-672)</name>
    <name type="common">Erwinia carotovora subsp. atroseptica</name>
    <dbReference type="NCBI Taxonomy" id="218491"/>
    <lineage>
        <taxon>Bacteria</taxon>
        <taxon>Pseudomonadati</taxon>
        <taxon>Pseudomonadota</taxon>
        <taxon>Gammaproteobacteria</taxon>
        <taxon>Enterobacterales</taxon>
        <taxon>Pectobacteriaceae</taxon>
        <taxon>Pectobacterium</taxon>
    </lineage>
</organism>
<feature type="chain" id="PRO_0000325118" description="Shikimate dehydrogenase (NADP(+))">
    <location>
        <begin position="1"/>
        <end position="275"/>
    </location>
</feature>
<feature type="active site" description="Proton acceptor" evidence="1">
    <location>
        <position position="68"/>
    </location>
</feature>
<feature type="binding site" evidence="1">
    <location>
        <begin position="17"/>
        <end position="19"/>
    </location>
    <ligand>
        <name>shikimate</name>
        <dbReference type="ChEBI" id="CHEBI:36208"/>
    </ligand>
</feature>
<feature type="binding site" evidence="1">
    <location>
        <position position="64"/>
    </location>
    <ligand>
        <name>shikimate</name>
        <dbReference type="ChEBI" id="CHEBI:36208"/>
    </ligand>
</feature>
<feature type="binding site" evidence="1">
    <location>
        <position position="80"/>
    </location>
    <ligand>
        <name>NADP(+)</name>
        <dbReference type="ChEBI" id="CHEBI:58349"/>
    </ligand>
</feature>
<feature type="binding site" evidence="1">
    <location>
        <position position="89"/>
    </location>
    <ligand>
        <name>shikimate</name>
        <dbReference type="ChEBI" id="CHEBI:36208"/>
    </ligand>
</feature>
<feature type="binding site" evidence="1">
    <location>
        <position position="105"/>
    </location>
    <ligand>
        <name>shikimate</name>
        <dbReference type="ChEBI" id="CHEBI:36208"/>
    </ligand>
</feature>
<feature type="binding site" evidence="1">
    <location>
        <begin position="129"/>
        <end position="133"/>
    </location>
    <ligand>
        <name>NADP(+)</name>
        <dbReference type="ChEBI" id="CHEBI:58349"/>
    </ligand>
</feature>
<feature type="binding site" evidence="1">
    <location>
        <begin position="152"/>
        <end position="157"/>
    </location>
    <ligand>
        <name>NADP(+)</name>
        <dbReference type="ChEBI" id="CHEBI:58349"/>
    </ligand>
</feature>
<feature type="binding site" evidence="1">
    <location>
        <position position="216"/>
    </location>
    <ligand>
        <name>NADP(+)</name>
        <dbReference type="ChEBI" id="CHEBI:58349"/>
    </ligand>
</feature>
<feature type="binding site" evidence="1">
    <location>
        <position position="218"/>
    </location>
    <ligand>
        <name>shikimate</name>
        <dbReference type="ChEBI" id="CHEBI:36208"/>
    </ligand>
</feature>
<feature type="binding site" evidence="1">
    <location>
        <position position="240"/>
    </location>
    <ligand>
        <name>NADP(+)</name>
        <dbReference type="ChEBI" id="CHEBI:58349"/>
    </ligand>
</feature>
<proteinExistence type="inferred from homology"/>
<comment type="function">
    <text evidence="1">Involved in the biosynthesis of the chorismate, which leads to the biosynthesis of aromatic amino acids. Catalyzes the reversible NADPH linked reduction of 3-dehydroshikimate (DHSA) to yield shikimate (SA).</text>
</comment>
<comment type="catalytic activity">
    <reaction evidence="1">
        <text>shikimate + NADP(+) = 3-dehydroshikimate + NADPH + H(+)</text>
        <dbReference type="Rhea" id="RHEA:17737"/>
        <dbReference type="ChEBI" id="CHEBI:15378"/>
        <dbReference type="ChEBI" id="CHEBI:16630"/>
        <dbReference type="ChEBI" id="CHEBI:36208"/>
        <dbReference type="ChEBI" id="CHEBI:57783"/>
        <dbReference type="ChEBI" id="CHEBI:58349"/>
        <dbReference type="EC" id="1.1.1.25"/>
    </reaction>
</comment>
<comment type="pathway">
    <text evidence="1">Metabolic intermediate biosynthesis; chorismate biosynthesis; chorismate from D-erythrose 4-phosphate and phosphoenolpyruvate: step 4/7.</text>
</comment>
<comment type="subunit">
    <text evidence="1">Homodimer.</text>
</comment>
<comment type="similarity">
    <text evidence="1">Belongs to the shikimate dehydrogenase family.</text>
</comment>
<protein>
    <recommendedName>
        <fullName evidence="1">Shikimate dehydrogenase (NADP(+))</fullName>
        <shortName evidence="1">SDH</shortName>
        <ecNumber evidence="1">1.1.1.25</ecNumber>
    </recommendedName>
</protein>
<sequence length="275" mass="29628">MSEVTSFAVFGNPIAHSKSPRIHELFAAQTGITLTYQRVLAPLDNFEQMLRQYFHDGAGGANVTAPFKERAFAEADERSECAALAGAVNTLKRLSDGRLYGDNTDGIGLLSDLQRLALVKPLDRVLLVGAGGAARGVIQPLLASGCTVVLTNRTFFKAEALAKIFCDIGDIQATALDGLHGQSFDLIINATSSGMYDSIPNLPAELISPETSCYDMFYLPQLTPFLSWCVQQGAIHYADGLGMLVGQAAHAFKLWHGVMPDVEPVIDLLKQDLAK</sequence>
<evidence type="ECO:0000255" key="1">
    <source>
        <dbReference type="HAMAP-Rule" id="MF_00222"/>
    </source>
</evidence>
<reference key="1">
    <citation type="journal article" date="2004" name="Proc. Natl. Acad. Sci. U.S.A.">
        <title>Genome sequence of the enterobacterial phytopathogen Erwinia carotovora subsp. atroseptica and characterization of virulence factors.</title>
        <authorList>
            <person name="Bell K.S."/>
            <person name="Sebaihia M."/>
            <person name="Pritchard L."/>
            <person name="Holden M.T.G."/>
            <person name="Hyman L.J."/>
            <person name="Holeva M.C."/>
            <person name="Thomson N.R."/>
            <person name="Bentley S.D."/>
            <person name="Churcher L.J.C."/>
            <person name="Mungall K."/>
            <person name="Atkin R."/>
            <person name="Bason N."/>
            <person name="Brooks K."/>
            <person name="Chillingworth T."/>
            <person name="Clark K."/>
            <person name="Doggett J."/>
            <person name="Fraser A."/>
            <person name="Hance Z."/>
            <person name="Hauser H."/>
            <person name="Jagels K."/>
            <person name="Moule S."/>
            <person name="Norbertczak H."/>
            <person name="Ormond D."/>
            <person name="Price C."/>
            <person name="Quail M.A."/>
            <person name="Sanders M."/>
            <person name="Walker D."/>
            <person name="Whitehead S."/>
            <person name="Salmond G.P.C."/>
            <person name="Birch P.R.J."/>
            <person name="Parkhill J."/>
            <person name="Toth I.K."/>
        </authorList>
    </citation>
    <scope>NUCLEOTIDE SEQUENCE [LARGE SCALE GENOMIC DNA]</scope>
    <source>
        <strain>SCRI 1043 / ATCC BAA-672</strain>
    </source>
</reference>
<gene>
    <name evidence="1" type="primary">aroE</name>
    <name type="ordered locus">ECA3995</name>
</gene>
<name>AROE_PECAS</name>
<keyword id="KW-0028">Amino-acid biosynthesis</keyword>
<keyword id="KW-0057">Aromatic amino acid biosynthesis</keyword>
<keyword id="KW-0521">NADP</keyword>
<keyword id="KW-0560">Oxidoreductase</keyword>
<keyword id="KW-1185">Reference proteome</keyword>
<dbReference type="EC" id="1.1.1.25" evidence="1"/>
<dbReference type="EMBL" id="BX950851">
    <property type="protein sequence ID" value="CAG76892.1"/>
    <property type="molecule type" value="Genomic_DNA"/>
</dbReference>
<dbReference type="RefSeq" id="WP_011095489.1">
    <property type="nucleotide sequence ID" value="NC_004547.2"/>
</dbReference>
<dbReference type="SMR" id="Q6D006"/>
<dbReference type="STRING" id="218491.ECA3995"/>
<dbReference type="GeneID" id="57210660"/>
<dbReference type="KEGG" id="eca:ECA3995"/>
<dbReference type="PATRIC" id="fig|218491.5.peg.4061"/>
<dbReference type="eggNOG" id="COG0169">
    <property type="taxonomic scope" value="Bacteria"/>
</dbReference>
<dbReference type="HOGENOM" id="CLU_044063_2_1_6"/>
<dbReference type="OrthoDB" id="9776868at2"/>
<dbReference type="UniPathway" id="UPA00053">
    <property type="reaction ID" value="UER00087"/>
</dbReference>
<dbReference type="Proteomes" id="UP000007966">
    <property type="component" value="Chromosome"/>
</dbReference>
<dbReference type="GO" id="GO:0005829">
    <property type="term" value="C:cytosol"/>
    <property type="evidence" value="ECO:0007669"/>
    <property type="project" value="TreeGrafter"/>
</dbReference>
<dbReference type="GO" id="GO:0050661">
    <property type="term" value="F:NADP binding"/>
    <property type="evidence" value="ECO:0007669"/>
    <property type="project" value="InterPro"/>
</dbReference>
<dbReference type="GO" id="GO:0004764">
    <property type="term" value="F:shikimate 3-dehydrogenase (NADP+) activity"/>
    <property type="evidence" value="ECO:0007669"/>
    <property type="project" value="UniProtKB-UniRule"/>
</dbReference>
<dbReference type="GO" id="GO:0008652">
    <property type="term" value="P:amino acid biosynthetic process"/>
    <property type="evidence" value="ECO:0007669"/>
    <property type="project" value="UniProtKB-KW"/>
</dbReference>
<dbReference type="GO" id="GO:0009073">
    <property type="term" value="P:aromatic amino acid family biosynthetic process"/>
    <property type="evidence" value="ECO:0007669"/>
    <property type="project" value="UniProtKB-KW"/>
</dbReference>
<dbReference type="GO" id="GO:0009423">
    <property type="term" value="P:chorismate biosynthetic process"/>
    <property type="evidence" value="ECO:0007669"/>
    <property type="project" value="UniProtKB-UniRule"/>
</dbReference>
<dbReference type="GO" id="GO:0019632">
    <property type="term" value="P:shikimate metabolic process"/>
    <property type="evidence" value="ECO:0007669"/>
    <property type="project" value="InterPro"/>
</dbReference>
<dbReference type="CDD" id="cd01065">
    <property type="entry name" value="NAD_bind_Shikimate_DH"/>
    <property type="match status" value="1"/>
</dbReference>
<dbReference type="FunFam" id="3.40.50.10860:FF:000006">
    <property type="entry name" value="Shikimate dehydrogenase (NADP(+))"/>
    <property type="match status" value="1"/>
</dbReference>
<dbReference type="FunFam" id="3.40.50.720:FF:000104">
    <property type="entry name" value="Shikimate dehydrogenase (NADP(+))"/>
    <property type="match status" value="1"/>
</dbReference>
<dbReference type="Gene3D" id="3.40.50.10860">
    <property type="entry name" value="Leucine Dehydrogenase, chain A, domain 1"/>
    <property type="match status" value="1"/>
</dbReference>
<dbReference type="Gene3D" id="3.40.50.720">
    <property type="entry name" value="NAD(P)-binding Rossmann-like Domain"/>
    <property type="match status" value="1"/>
</dbReference>
<dbReference type="HAMAP" id="MF_00222">
    <property type="entry name" value="Shikimate_DH_AroE"/>
    <property type="match status" value="1"/>
</dbReference>
<dbReference type="InterPro" id="IPR046346">
    <property type="entry name" value="Aminoacid_DH-like_N_sf"/>
</dbReference>
<dbReference type="InterPro" id="IPR036291">
    <property type="entry name" value="NAD(P)-bd_dom_sf"/>
</dbReference>
<dbReference type="InterPro" id="IPR041121">
    <property type="entry name" value="SDH_C"/>
</dbReference>
<dbReference type="InterPro" id="IPR011342">
    <property type="entry name" value="Shikimate_DH"/>
</dbReference>
<dbReference type="InterPro" id="IPR013708">
    <property type="entry name" value="Shikimate_DH-bd_N"/>
</dbReference>
<dbReference type="InterPro" id="IPR022893">
    <property type="entry name" value="Shikimate_DH_fam"/>
</dbReference>
<dbReference type="InterPro" id="IPR006151">
    <property type="entry name" value="Shikm_DH/Glu-tRNA_Rdtase"/>
</dbReference>
<dbReference type="NCBIfam" id="TIGR00507">
    <property type="entry name" value="aroE"/>
    <property type="match status" value="1"/>
</dbReference>
<dbReference type="NCBIfam" id="NF001310">
    <property type="entry name" value="PRK00258.1-2"/>
    <property type="match status" value="1"/>
</dbReference>
<dbReference type="PANTHER" id="PTHR21089:SF1">
    <property type="entry name" value="BIFUNCTIONAL 3-DEHYDROQUINATE DEHYDRATASE_SHIKIMATE DEHYDROGENASE, CHLOROPLASTIC"/>
    <property type="match status" value="1"/>
</dbReference>
<dbReference type="PANTHER" id="PTHR21089">
    <property type="entry name" value="SHIKIMATE DEHYDROGENASE"/>
    <property type="match status" value="1"/>
</dbReference>
<dbReference type="Pfam" id="PF18317">
    <property type="entry name" value="SDH_C"/>
    <property type="match status" value="1"/>
</dbReference>
<dbReference type="Pfam" id="PF01488">
    <property type="entry name" value="Shikimate_DH"/>
    <property type="match status" value="1"/>
</dbReference>
<dbReference type="Pfam" id="PF08501">
    <property type="entry name" value="Shikimate_dh_N"/>
    <property type="match status" value="1"/>
</dbReference>
<dbReference type="SUPFAM" id="SSF53223">
    <property type="entry name" value="Aminoacid dehydrogenase-like, N-terminal domain"/>
    <property type="match status" value="1"/>
</dbReference>
<dbReference type="SUPFAM" id="SSF51735">
    <property type="entry name" value="NAD(P)-binding Rossmann-fold domains"/>
    <property type="match status" value="1"/>
</dbReference>